<keyword id="KW-0536">Nodulation</keyword>
<keyword id="KW-0614">Plasmid</keyword>
<evidence type="ECO:0000256" key="1">
    <source>
        <dbReference type="SAM" id="MobiDB-lite"/>
    </source>
</evidence>
<geneLocation type="plasmid">
    <name>sym</name>
</geneLocation>
<name>NOLX_RHIFR</name>
<gene>
    <name type="primary">nolX</name>
</gene>
<dbReference type="EMBL" id="L12251">
    <property type="protein sequence ID" value="AAB17674.1"/>
    <property type="status" value="ALT_SEQ"/>
    <property type="molecule type" value="Genomic_DNA"/>
</dbReference>
<dbReference type="PIR" id="S35019">
    <property type="entry name" value="S35019"/>
</dbReference>
<dbReference type="InterPro" id="IPR008718">
    <property type="entry name" value="NolX"/>
</dbReference>
<dbReference type="Pfam" id="PF05819">
    <property type="entry name" value="NolX"/>
    <property type="match status" value="1"/>
</dbReference>
<feature type="chain" id="PRO_0000096951" description="Nodulation protein NolX">
    <location>
        <begin position="1"/>
        <end position="471"/>
    </location>
</feature>
<feature type="region of interest" description="Disordered" evidence="1">
    <location>
        <begin position="448"/>
        <end position="471"/>
    </location>
</feature>
<accession>P33213</accession>
<comment type="function">
    <text>Regulates cultivar-specific nodulation of soybean.</text>
</comment>
<comment type="developmental stage">
    <text>Expressed continuously from preinfection to the stage of the functional nodule.</text>
</comment>
<comment type="induction">
    <text>By flavonoid signal compounds.</text>
</comment>
<proteinExistence type="evidence at transcript level"/>
<organism>
    <name type="scientific">Rhizobium fredii</name>
    <name type="common">Sinorhizobium fredii</name>
    <dbReference type="NCBI Taxonomy" id="380"/>
    <lineage>
        <taxon>Bacteria</taxon>
        <taxon>Pseudomonadati</taxon>
        <taxon>Pseudomonadota</taxon>
        <taxon>Alphaproteobacteria</taxon>
        <taxon>Hyphomicrobiales</taxon>
        <taxon>Rhizobiaceae</taxon>
        <taxon>Sinorhizobium/Ensifer group</taxon>
        <taxon>Sinorhizobium</taxon>
    </lineage>
</organism>
<protein>
    <recommendedName>
        <fullName>Nodulation protein NolX</fullName>
    </recommendedName>
</protein>
<reference key="1">
    <citation type="journal article" date="1993" name="Mol. Microbiol.">
        <title>Molecular cloning and characterization of a sym plasmid locus that regulates cultivar-specific nodulation of soybean by Rhizobium fredii USDA257.</title>
        <authorList>
            <person name="Meinhardt L.W."/>
            <person name="Krishnan H.B."/>
            <person name="Balatti P.A."/>
            <person name="Pueppke S.G."/>
        </authorList>
    </citation>
    <scope>NUCLEOTIDE SEQUENCE [GENOMIC DNA]</scope>
    <source>
        <strain>USDA 257</strain>
    </source>
</reference>
<sequence>MSASNLLPMISSNPAQFAQASLAKAFAPRVAQGQQSVLSFEAMLSTNMLDRIGPLASREDLLPPDAESTLEDLQKDPLALLPPHMRAAIESMDQTPQSAVAIDDHYVAPAPIQSSRITWNGGSLTKPELQIVAVLNRHKDLCPLSWESLEAKVNDPSTPPDLKAAIEALLQDPELFYAIGSQGDGRCGGKITAKDLSEFSKHHPQVAAFQESQAQSYAQNYIPSDSAENAQPSVMTENDALRELYRYSEYLPKNLSLADFKQIVDGEAKTGKCPPQVIAAAQYFVSHPEEWKRLYGGNIDKVHKEDFLEVASSSMSLTQAELDTLKTINSHQELFFGSGDLTRDKLASMADDKSLDPKVREAASQLLSDPLLFGLLNNAITGYKTHHGFFDFGGGHTVDSGNVSKEDFGRFYTNMTTANRTVQQPKFHVPETEAAQNAVADMKMGLADQPDIKSPKKNGGASCMSSTPCCG</sequence>